<comment type="function">
    <text evidence="1">Binds to the 50S ribosomal subunit and prevents its association with the 30S ribosomal subunit to form the 70S initiation complex.</text>
</comment>
<comment type="similarity">
    <text evidence="1">Belongs to the eIF-6 family.</text>
</comment>
<proteinExistence type="inferred from homology"/>
<keyword id="KW-0396">Initiation factor</keyword>
<keyword id="KW-0648">Protein biosynthesis</keyword>
<keyword id="KW-1185">Reference proteome</keyword>
<feature type="chain" id="PRO_1000090395" description="Translation initiation factor 6">
    <location>
        <begin position="1"/>
        <end position="221"/>
    </location>
</feature>
<sequence>MDIIKFDVYRGPNIGVYISVNDNTILLPMGFAKTKAEKLAKYLGVNYLFTSIANTRLIGALCIMNNKGILLPKTAYQNEFDFLKKELDLEVGVLDSKLTALGNVICANDKGAVVSPWLSKEDCQTISDVLGVETIQKKIAGFNQTGVVMVANNSGAAIHPEADEEDMKTFSNLLGVKIEQSSINNGIPYVSSGILANNNCIIVGSLTTGPEIMMLTRAFLN</sequence>
<name>IF6_NITMS</name>
<reference key="1">
    <citation type="journal article" date="2010" name="Proc. Natl. Acad. Sci. U.S.A.">
        <title>Nitrosopumilus maritimus genome reveals unique mechanisms for nitrification and autotrophy in globally distributed marine crenarchaea.</title>
        <authorList>
            <person name="Walker C.B."/>
            <person name="de la Torre J.R."/>
            <person name="Klotz M.G."/>
            <person name="Urakawa H."/>
            <person name="Pinel N."/>
            <person name="Arp D.J."/>
            <person name="Brochier-Armanet C."/>
            <person name="Chain P.S."/>
            <person name="Chan P.P."/>
            <person name="Gollabgir A."/>
            <person name="Hemp J."/>
            <person name="Hugler M."/>
            <person name="Karr E.A."/>
            <person name="Konneke M."/>
            <person name="Shin M."/>
            <person name="Lawton T.J."/>
            <person name="Lowe T."/>
            <person name="Martens-Habbena W."/>
            <person name="Sayavedra-Soto L.A."/>
            <person name="Lang D."/>
            <person name="Sievert S.M."/>
            <person name="Rosenzweig A.C."/>
            <person name="Manning G."/>
            <person name="Stahl D.A."/>
        </authorList>
    </citation>
    <scope>NUCLEOTIDE SEQUENCE [LARGE SCALE GENOMIC DNA]</scope>
    <source>
        <strain>SCM1</strain>
    </source>
</reference>
<protein>
    <recommendedName>
        <fullName evidence="1">Translation initiation factor 6</fullName>
        <shortName evidence="1">aIF-6</shortName>
    </recommendedName>
</protein>
<dbReference type="EMBL" id="CP000866">
    <property type="protein sequence ID" value="ABX12133.1"/>
    <property type="molecule type" value="Genomic_DNA"/>
</dbReference>
<dbReference type="RefSeq" id="WP_012214620.1">
    <property type="nucleotide sequence ID" value="NC_010085.1"/>
</dbReference>
<dbReference type="SMR" id="A9A305"/>
<dbReference type="FunCoup" id="A9A305">
    <property type="interactions" value="176"/>
</dbReference>
<dbReference type="STRING" id="436308.Nmar_0237"/>
<dbReference type="EnsemblBacteria" id="ABX12133">
    <property type="protein sequence ID" value="ABX12133"/>
    <property type="gene ID" value="Nmar_0237"/>
</dbReference>
<dbReference type="GeneID" id="5773174"/>
<dbReference type="KEGG" id="nmr:Nmar_0237"/>
<dbReference type="eggNOG" id="arCOG04176">
    <property type="taxonomic scope" value="Archaea"/>
</dbReference>
<dbReference type="HOGENOM" id="CLU_071894_1_0_2"/>
<dbReference type="InParanoid" id="A9A305"/>
<dbReference type="OrthoDB" id="33582at2157"/>
<dbReference type="PhylomeDB" id="A9A305"/>
<dbReference type="Proteomes" id="UP000000792">
    <property type="component" value="Chromosome"/>
</dbReference>
<dbReference type="GO" id="GO:0005829">
    <property type="term" value="C:cytosol"/>
    <property type="evidence" value="ECO:0000318"/>
    <property type="project" value="GO_Central"/>
</dbReference>
<dbReference type="GO" id="GO:0043022">
    <property type="term" value="F:ribosome binding"/>
    <property type="evidence" value="ECO:0007669"/>
    <property type="project" value="InterPro"/>
</dbReference>
<dbReference type="GO" id="GO:0003743">
    <property type="term" value="F:translation initiation factor activity"/>
    <property type="evidence" value="ECO:0007669"/>
    <property type="project" value="UniProtKB-UniRule"/>
</dbReference>
<dbReference type="GO" id="GO:1902626">
    <property type="term" value="P:assembly of large subunit precursor of preribosome"/>
    <property type="evidence" value="ECO:0000318"/>
    <property type="project" value="GO_Central"/>
</dbReference>
<dbReference type="GO" id="GO:0042256">
    <property type="term" value="P:cytosolic ribosome assembly"/>
    <property type="evidence" value="ECO:0007669"/>
    <property type="project" value="InterPro"/>
</dbReference>
<dbReference type="GO" id="GO:0000460">
    <property type="term" value="P:maturation of 5.8S rRNA"/>
    <property type="evidence" value="ECO:0000318"/>
    <property type="project" value="GO_Central"/>
</dbReference>
<dbReference type="GO" id="GO:0000470">
    <property type="term" value="P:maturation of LSU-rRNA"/>
    <property type="evidence" value="ECO:0000318"/>
    <property type="project" value="GO_Central"/>
</dbReference>
<dbReference type="Gene3D" id="3.75.10.10">
    <property type="entry name" value="L-arginine/glycine Amidinotransferase, Chain A"/>
    <property type="match status" value="1"/>
</dbReference>
<dbReference type="HAMAP" id="MF_00032">
    <property type="entry name" value="eIF_6"/>
    <property type="match status" value="1"/>
</dbReference>
<dbReference type="InterPro" id="IPR002769">
    <property type="entry name" value="eIF6"/>
</dbReference>
<dbReference type="NCBIfam" id="TIGR00323">
    <property type="entry name" value="eIF-6"/>
    <property type="match status" value="1"/>
</dbReference>
<dbReference type="NCBIfam" id="NF003134">
    <property type="entry name" value="PRK04046.3-2"/>
    <property type="match status" value="1"/>
</dbReference>
<dbReference type="PANTHER" id="PTHR10784">
    <property type="entry name" value="TRANSLATION INITIATION FACTOR 6"/>
    <property type="match status" value="1"/>
</dbReference>
<dbReference type="Pfam" id="PF01912">
    <property type="entry name" value="eIF-6"/>
    <property type="match status" value="1"/>
</dbReference>
<dbReference type="PIRSF" id="PIRSF006413">
    <property type="entry name" value="IF-6"/>
    <property type="match status" value="1"/>
</dbReference>
<dbReference type="SMART" id="SM00654">
    <property type="entry name" value="eIF6"/>
    <property type="match status" value="1"/>
</dbReference>
<dbReference type="SUPFAM" id="SSF55909">
    <property type="entry name" value="Pentein"/>
    <property type="match status" value="1"/>
</dbReference>
<organism>
    <name type="scientific">Nitrosopumilus maritimus (strain SCM1)</name>
    <dbReference type="NCBI Taxonomy" id="436308"/>
    <lineage>
        <taxon>Archaea</taxon>
        <taxon>Nitrososphaerota</taxon>
        <taxon>Nitrososphaeria</taxon>
        <taxon>Nitrosopumilales</taxon>
        <taxon>Nitrosopumilaceae</taxon>
        <taxon>Nitrosopumilus</taxon>
    </lineage>
</organism>
<accession>A9A305</accession>
<gene>
    <name evidence="1" type="primary">eif6</name>
    <name type="ordered locus">Nmar_0237</name>
</gene>
<evidence type="ECO:0000255" key="1">
    <source>
        <dbReference type="HAMAP-Rule" id="MF_00032"/>
    </source>
</evidence>